<sequence length="223" mass="25739">MDRKIVQLIHNFSGTEKLKAAVFSHDEQCFFDFVSFDELNSKLTGFLLFDSLEKLFKLVETIQQKRSWLYVDELWLINTATENQQLNEVSVWLVKKELAQVGVLTQLDTSLVKLLMASKNTDSALYNTYIKPVELQQFTQTPAPDNVNAEQSHLTLESTTDLNNSQLANTPALWEVEQTTQELLPTMDFSKFIDELDQITKNFSDLELEPLSFNEGFDEWNQE</sequence>
<organism>
    <name type="scientific">Mycoplasma pneumoniae (strain ATCC 29342 / M129 / Subtype 1)</name>
    <name type="common">Mycoplasmoides pneumoniae</name>
    <dbReference type="NCBI Taxonomy" id="272634"/>
    <lineage>
        <taxon>Bacteria</taxon>
        <taxon>Bacillati</taxon>
        <taxon>Mycoplasmatota</taxon>
        <taxon>Mycoplasmoidales</taxon>
        <taxon>Mycoplasmoidaceae</taxon>
        <taxon>Mycoplasmoides</taxon>
    </lineage>
</organism>
<name>Y256_MYCPN</name>
<proteinExistence type="predicted"/>
<accession>P75518</accession>
<feature type="chain" id="PRO_0000210422" description="Uncharacterized protein MG117 homolog">
    <location>
        <begin position="1"/>
        <end position="223"/>
    </location>
</feature>
<dbReference type="EMBL" id="U00089">
    <property type="protein sequence ID" value="AAB96225.1"/>
    <property type="molecule type" value="Genomic_DNA"/>
</dbReference>
<dbReference type="PIR" id="S73903">
    <property type="entry name" value="S73903"/>
</dbReference>
<dbReference type="RefSeq" id="NP_109944.1">
    <property type="nucleotide sequence ID" value="NC_000912.1"/>
</dbReference>
<dbReference type="RefSeq" id="WP_010874613.1">
    <property type="nucleotide sequence ID" value="NZ_OU342337.1"/>
</dbReference>
<dbReference type="STRING" id="272634.MPN_256"/>
<dbReference type="EnsemblBacteria" id="AAB96225">
    <property type="protein sequence ID" value="AAB96225"/>
    <property type="gene ID" value="MPN_256"/>
</dbReference>
<dbReference type="KEGG" id="mpn:MPN_256"/>
<dbReference type="PATRIC" id="fig|272634.6.peg.275"/>
<dbReference type="HOGENOM" id="CLU_1239052_0_0_14"/>
<dbReference type="OrthoDB" id="9986270at2"/>
<dbReference type="BioCyc" id="MPNE272634:G1GJ3-403-MONOMER"/>
<dbReference type="Proteomes" id="UP000000808">
    <property type="component" value="Chromosome"/>
</dbReference>
<dbReference type="NCBIfam" id="NF045744">
    <property type="entry name" value="MPN256"/>
    <property type="match status" value="1"/>
</dbReference>
<protein>
    <recommendedName>
        <fullName>Uncharacterized protein MG117 homolog</fullName>
    </recommendedName>
</protein>
<reference key="1">
    <citation type="journal article" date="1996" name="Nucleic Acids Res.">
        <title>Complete sequence analysis of the genome of the bacterium Mycoplasma pneumoniae.</title>
        <authorList>
            <person name="Himmelreich R."/>
            <person name="Hilbert H."/>
            <person name="Plagens H."/>
            <person name="Pirkl E."/>
            <person name="Li B.-C."/>
            <person name="Herrmann R."/>
        </authorList>
    </citation>
    <scope>NUCLEOTIDE SEQUENCE [LARGE SCALE GENOMIC DNA]</scope>
    <source>
        <strain>ATCC 29342 / M129 / Subtype 1</strain>
    </source>
</reference>
<gene>
    <name type="ordered locus">MPN_256</name>
    <name type="ORF">A65_orf223</name>
    <name type="ORF">MP577</name>
</gene>
<keyword id="KW-1185">Reference proteome</keyword>